<reference key="1">
    <citation type="journal article" date="1985" name="J. Mol. Biol.">
        <title>Partition of unit-copy miniplasmids to daughter cells. III. The DNA sequence and functional organization of the P1 partition region.</title>
        <authorList>
            <person name="Abeles A.L."/>
            <person name="Friedman S.A."/>
            <person name="Austin S.J."/>
        </authorList>
    </citation>
    <scope>NUCLEOTIDE SEQUENCE [GENOMIC DNA]</scope>
</reference>
<geneLocation type="plasmid">
    <name>P1</name>
</geneLocation>
<sequence length="343" mass="38520">MSKKNRPTIGRTLNPSILSGFDSSSASGDRVEQVFKLSTGRQATFIEEVIPPNQVESDTFVDQHNNGRDQASLTPKSLKSIRSTIKHQQFYPAIGVRRATGKIEILDGSRRRASAILENVGLRVLVTDQEISVQEAQNLAKDVQTALQHSIREIGLRLMRMKNDGMSQKDIAAKEGLSQAKVTRALQAASAPEELVALFPVQSELTFSDYKTLCAVGDEMGNKNLEFDQLIQNISPEINDILSIEEMAEDEVKNKILRLITKEASLLTDKGSKDKSVVTELWKFEDKDRFARKRVKGRAFSYEFNRLSKRVTGRTRQDDCGISLERASIKSRSLKLSPFKFHY</sequence>
<protein>
    <recommendedName>
        <fullName>Plasmid Partition par B protein</fullName>
    </recommendedName>
</protein>
<proteinExistence type="inferred from homology"/>
<accession>P07621</accession>
<organism>
    <name type="scientific">Escherichia coli</name>
    <dbReference type="NCBI Taxonomy" id="562"/>
    <lineage>
        <taxon>Bacteria</taxon>
        <taxon>Pseudomonadati</taxon>
        <taxon>Pseudomonadota</taxon>
        <taxon>Gammaproteobacteria</taxon>
        <taxon>Enterobacterales</taxon>
        <taxon>Enterobacteriaceae</taxon>
        <taxon>Escherichia</taxon>
    </lineage>
</organism>
<dbReference type="EMBL" id="X02954">
    <property type="protein sequence ID" value="CAA26699.1"/>
    <property type="molecule type" value="Genomic_DNA"/>
</dbReference>
<dbReference type="SMR" id="P07621"/>
<dbReference type="CD-CODE" id="54B206F5">
    <property type="entry name" value="Synthetic Condensate 000335"/>
</dbReference>
<dbReference type="GO" id="GO:0003677">
    <property type="term" value="F:DNA binding"/>
    <property type="evidence" value="ECO:0007669"/>
    <property type="project" value="UniProtKB-KW"/>
</dbReference>
<dbReference type="GO" id="GO:0030541">
    <property type="term" value="P:plasmid partitioning"/>
    <property type="evidence" value="ECO:0007669"/>
    <property type="project" value="UniProtKB-KW"/>
</dbReference>
<dbReference type="CDD" id="cd16394">
    <property type="entry name" value="sopB_N"/>
    <property type="match status" value="1"/>
</dbReference>
<dbReference type="Gene3D" id="1.10.10.2830">
    <property type="match status" value="1"/>
</dbReference>
<dbReference type="InterPro" id="IPR004437">
    <property type="entry name" value="ParB/RepB/Spo0J"/>
</dbReference>
<dbReference type="InterPro" id="IPR003115">
    <property type="entry name" value="ParB/Sulfiredoxin_dom"/>
</dbReference>
<dbReference type="InterPro" id="IPR014884">
    <property type="entry name" value="ParB_fam_C"/>
</dbReference>
<dbReference type="NCBIfam" id="TIGR00180">
    <property type="entry name" value="parB_part"/>
    <property type="match status" value="1"/>
</dbReference>
<dbReference type="PANTHER" id="PTHR38973:SF1">
    <property type="entry name" value="PLASMID PARTITION PROTEIN B"/>
    <property type="match status" value="1"/>
</dbReference>
<dbReference type="PANTHER" id="PTHR38973">
    <property type="entry name" value="PLASMID PARTITIONING CONTROL PROTEIN-RELATED"/>
    <property type="match status" value="1"/>
</dbReference>
<dbReference type="Pfam" id="PF08775">
    <property type="entry name" value="ParB"/>
    <property type="match status" value="1"/>
</dbReference>
<dbReference type="Pfam" id="PF02195">
    <property type="entry name" value="ParBc"/>
    <property type="match status" value="1"/>
</dbReference>
<dbReference type="SMART" id="SM00470">
    <property type="entry name" value="ParB"/>
    <property type="match status" value="1"/>
</dbReference>
<dbReference type="SUPFAM" id="SSF109709">
    <property type="entry name" value="KorB DNA-binding domain-like"/>
    <property type="match status" value="1"/>
</dbReference>
<name>PARB_ECOLX</name>
<feature type="chain" id="PRO_0000068407" description="Plasmid Partition par B protein">
    <location>
        <begin position="1"/>
        <end position="343"/>
    </location>
</feature>
<feature type="DNA-binding region" description="H-T-H motif" evidence="1">
    <location>
        <begin position="169"/>
        <end position="188"/>
    </location>
</feature>
<feature type="region of interest" description="Disordered" evidence="2">
    <location>
        <begin position="1"/>
        <end position="26"/>
    </location>
</feature>
<feature type="region of interest" description="Disordered" evidence="2">
    <location>
        <begin position="56"/>
        <end position="76"/>
    </location>
</feature>
<feature type="compositionally biased region" description="Polar residues" evidence="2">
    <location>
        <begin position="11"/>
        <end position="26"/>
    </location>
</feature>
<keyword id="KW-0238">DNA-binding</keyword>
<keyword id="KW-0614">Plasmid</keyword>
<keyword id="KW-0616">Plasmid partition</keyword>
<gene>
    <name type="primary">parB</name>
</gene>
<evidence type="ECO:0000250" key="1"/>
<evidence type="ECO:0000256" key="2">
    <source>
        <dbReference type="SAM" id="MobiDB-lite"/>
    </source>
</evidence>
<evidence type="ECO:0000305" key="3"/>
<comment type="function">
    <text>Control of plasmid partitioning; required to recognize the cis-acting partition sites.</text>
</comment>
<comment type="similarity">
    <text evidence="3">Belongs to the ParB family.</text>
</comment>